<comment type="function">
    <text evidence="1">Involved in targeting and insertion of nascent membrane proteins into the cytoplasmic membrane. Binds to the hydrophobic signal sequence of the ribosome-nascent chain (RNC) as it emerges from the ribosomes. The SRP-RNC complex is then targeted to the cytoplasmic membrane where it interacts with the SRP receptor FtsY.</text>
</comment>
<comment type="catalytic activity">
    <reaction evidence="1">
        <text>GTP + H2O = GDP + phosphate + H(+)</text>
        <dbReference type="Rhea" id="RHEA:19669"/>
        <dbReference type="ChEBI" id="CHEBI:15377"/>
        <dbReference type="ChEBI" id="CHEBI:15378"/>
        <dbReference type="ChEBI" id="CHEBI:37565"/>
        <dbReference type="ChEBI" id="CHEBI:43474"/>
        <dbReference type="ChEBI" id="CHEBI:58189"/>
        <dbReference type="EC" id="3.6.5.4"/>
    </reaction>
</comment>
<comment type="subunit">
    <text evidence="1">Part of the signal recognition particle protein translocation system, which is composed of SRP and FtsY. Archaeal SRP consists of a 7S RNA molecule of 300 nucleotides and two protein subunits: SRP54 and SRP19.</text>
</comment>
<comment type="subcellular location">
    <subcellularLocation>
        <location evidence="1">Cytoplasm</location>
    </subcellularLocation>
    <text evidence="1">The SRP-RNC complex is targeted to the cytoplasmic membrane.</text>
</comment>
<comment type="domain">
    <text evidence="1">Composed of three domains: the N-terminal N domain, which is responsible for interactions with the ribosome, the central G domain, which binds GTP, and the C-terminal M domain, which binds the RNA and the signal sequence of the RNC.</text>
</comment>
<comment type="similarity">
    <text evidence="1">Belongs to the GTP-binding SRP family. SRP54 subfamily.</text>
</comment>
<name>SRP54_HALS3</name>
<evidence type="ECO:0000255" key="1">
    <source>
        <dbReference type="HAMAP-Rule" id="MF_00306"/>
    </source>
</evidence>
<feature type="chain" id="PRO_1000115619" description="Signal recognition particle 54 kDa protein">
    <location>
        <begin position="1"/>
        <end position="460"/>
    </location>
</feature>
<feature type="binding site" evidence="1">
    <location>
        <begin position="104"/>
        <end position="111"/>
    </location>
    <ligand>
        <name>GTP</name>
        <dbReference type="ChEBI" id="CHEBI:37565"/>
    </ligand>
</feature>
<feature type="binding site" evidence="1">
    <location>
        <begin position="184"/>
        <end position="188"/>
    </location>
    <ligand>
        <name>GTP</name>
        <dbReference type="ChEBI" id="CHEBI:37565"/>
    </ligand>
</feature>
<feature type="binding site" evidence="1">
    <location>
        <begin position="242"/>
        <end position="245"/>
    </location>
    <ligand>
        <name>GTP</name>
        <dbReference type="ChEBI" id="CHEBI:37565"/>
    </ligand>
</feature>
<reference key="1">
    <citation type="journal article" date="2008" name="Genomics">
        <title>Evolution in the laboratory: the genome of Halobacterium salinarum strain R1 compared to that of strain NRC-1.</title>
        <authorList>
            <person name="Pfeiffer F."/>
            <person name="Schuster S.C."/>
            <person name="Broicher A."/>
            <person name="Falb M."/>
            <person name="Palm P."/>
            <person name="Rodewald K."/>
            <person name="Ruepp A."/>
            <person name="Soppa J."/>
            <person name="Tittor J."/>
            <person name="Oesterhelt D."/>
        </authorList>
    </citation>
    <scope>NUCLEOTIDE SEQUENCE [LARGE SCALE GENOMIC DNA]</scope>
    <source>
        <strain>ATCC 29341 / DSM 671 / R1</strain>
    </source>
</reference>
<keyword id="KW-0963">Cytoplasm</keyword>
<keyword id="KW-0342">GTP-binding</keyword>
<keyword id="KW-0378">Hydrolase</keyword>
<keyword id="KW-0547">Nucleotide-binding</keyword>
<keyword id="KW-0687">Ribonucleoprotein</keyword>
<keyword id="KW-0694">RNA-binding</keyword>
<keyword id="KW-0733">Signal recognition particle</keyword>
<dbReference type="EC" id="3.6.5.4" evidence="1"/>
<dbReference type="EMBL" id="AM774415">
    <property type="protein sequence ID" value="CAP14842.1"/>
    <property type="molecule type" value="Genomic_DNA"/>
</dbReference>
<dbReference type="RefSeq" id="WP_010903838.1">
    <property type="nucleotide sequence ID" value="NC_010364.1"/>
</dbReference>
<dbReference type="SMR" id="B0R7X3"/>
<dbReference type="EnsemblBacteria" id="CAP14842">
    <property type="protein sequence ID" value="CAP14842"/>
    <property type="gene ID" value="OE_4450R"/>
</dbReference>
<dbReference type="KEGG" id="hsl:OE_4450R"/>
<dbReference type="HOGENOM" id="CLU_009301_6_0_2"/>
<dbReference type="PhylomeDB" id="B0R7X3"/>
<dbReference type="Proteomes" id="UP000001321">
    <property type="component" value="Chromosome"/>
</dbReference>
<dbReference type="GO" id="GO:0048500">
    <property type="term" value="C:signal recognition particle"/>
    <property type="evidence" value="ECO:0007669"/>
    <property type="project" value="UniProtKB-UniRule"/>
</dbReference>
<dbReference type="GO" id="GO:0008312">
    <property type="term" value="F:7S RNA binding"/>
    <property type="evidence" value="ECO:0007669"/>
    <property type="project" value="UniProtKB-UniRule"/>
</dbReference>
<dbReference type="GO" id="GO:0016887">
    <property type="term" value="F:ATP hydrolysis activity"/>
    <property type="evidence" value="ECO:0007669"/>
    <property type="project" value="InterPro"/>
</dbReference>
<dbReference type="GO" id="GO:0005525">
    <property type="term" value="F:GTP binding"/>
    <property type="evidence" value="ECO:0007669"/>
    <property type="project" value="UniProtKB-UniRule"/>
</dbReference>
<dbReference type="GO" id="GO:0003924">
    <property type="term" value="F:GTPase activity"/>
    <property type="evidence" value="ECO:0007669"/>
    <property type="project" value="UniProtKB-UniRule"/>
</dbReference>
<dbReference type="GO" id="GO:0006614">
    <property type="term" value="P:SRP-dependent cotranslational protein targeting to membrane"/>
    <property type="evidence" value="ECO:0007669"/>
    <property type="project" value="InterPro"/>
</dbReference>
<dbReference type="CDD" id="cd17875">
    <property type="entry name" value="SRP54_G"/>
    <property type="match status" value="1"/>
</dbReference>
<dbReference type="Gene3D" id="3.40.50.300">
    <property type="entry name" value="P-loop containing nucleotide triphosphate hydrolases"/>
    <property type="match status" value="1"/>
</dbReference>
<dbReference type="Gene3D" id="1.20.120.140">
    <property type="entry name" value="Signal recognition particle SRP54, nucleotide-binding domain"/>
    <property type="match status" value="1"/>
</dbReference>
<dbReference type="Gene3D" id="1.10.260.30">
    <property type="entry name" value="Signal recognition particle, SRP54 subunit, M-domain"/>
    <property type="match status" value="1"/>
</dbReference>
<dbReference type="HAMAP" id="MF_00306">
    <property type="entry name" value="SRP54"/>
    <property type="match status" value="1"/>
</dbReference>
<dbReference type="InterPro" id="IPR003593">
    <property type="entry name" value="AAA+_ATPase"/>
</dbReference>
<dbReference type="InterPro" id="IPR027417">
    <property type="entry name" value="P-loop_NTPase"/>
</dbReference>
<dbReference type="InterPro" id="IPR036891">
    <property type="entry name" value="Signal_recog_part_SRP54_M_sf"/>
</dbReference>
<dbReference type="InterPro" id="IPR013822">
    <property type="entry name" value="Signal_recog_particl_SRP54_hlx"/>
</dbReference>
<dbReference type="InterPro" id="IPR004125">
    <property type="entry name" value="Signal_recog_particle_SRP54_M"/>
</dbReference>
<dbReference type="InterPro" id="IPR036225">
    <property type="entry name" value="SRP/SRP_N"/>
</dbReference>
<dbReference type="InterPro" id="IPR022941">
    <property type="entry name" value="SRP54"/>
</dbReference>
<dbReference type="InterPro" id="IPR000897">
    <property type="entry name" value="SRP54_GTPase_dom"/>
</dbReference>
<dbReference type="InterPro" id="IPR042101">
    <property type="entry name" value="SRP54_N_sf"/>
</dbReference>
<dbReference type="PANTHER" id="PTHR11564">
    <property type="entry name" value="SIGNAL RECOGNITION PARTICLE 54K PROTEIN SRP54"/>
    <property type="match status" value="1"/>
</dbReference>
<dbReference type="PANTHER" id="PTHR11564:SF5">
    <property type="entry name" value="SIGNAL RECOGNITION PARTICLE SUBUNIT SRP54"/>
    <property type="match status" value="1"/>
</dbReference>
<dbReference type="Pfam" id="PF00448">
    <property type="entry name" value="SRP54"/>
    <property type="match status" value="1"/>
</dbReference>
<dbReference type="Pfam" id="PF02881">
    <property type="entry name" value="SRP54_N"/>
    <property type="match status" value="1"/>
</dbReference>
<dbReference type="Pfam" id="PF02978">
    <property type="entry name" value="SRP_SPB"/>
    <property type="match status" value="1"/>
</dbReference>
<dbReference type="SMART" id="SM00382">
    <property type="entry name" value="AAA"/>
    <property type="match status" value="1"/>
</dbReference>
<dbReference type="SMART" id="SM00962">
    <property type="entry name" value="SRP54"/>
    <property type="match status" value="1"/>
</dbReference>
<dbReference type="SMART" id="SM00963">
    <property type="entry name" value="SRP54_N"/>
    <property type="match status" value="1"/>
</dbReference>
<dbReference type="SUPFAM" id="SSF47364">
    <property type="entry name" value="Domain of the SRP/SRP receptor G-proteins"/>
    <property type="match status" value="1"/>
</dbReference>
<dbReference type="SUPFAM" id="SSF52540">
    <property type="entry name" value="P-loop containing nucleoside triphosphate hydrolases"/>
    <property type="match status" value="1"/>
</dbReference>
<dbReference type="SUPFAM" id="SSF47446">
    <property type="entry name" value="Signal peptide-binding domain"/>
    <property type="match status" value="1"/>
</dbReference>
<sequence length="460" mass="50149">MVLDDLGSSLRGTLDTLRGKSRISEEDVDKVVKEIQRSLLQADVDVDLVMDLSESITERSLEEEPPGGTSARDHVLRIVYEELVGLVGDSTPIPLEEQTIMLAGLQGSGKTTTAAKMAWWFSKKGLRPAIVQTDTFRPGAYEQAAEMADRAEVDFYGEPDSDDPVQIARDGLAATADADVHIVDTAGRHALEDDLIAEIEEIEGVVEPDRSLLVLDAAIGQGAKQQARQFDASIGIDGVAITKLDGTAKGGGSLTAVNETDSTIAFLGSGETVQDIERFEPDSFISRLLGMGDLKQLTERVERAMEETQDDDEDWDPEDLMKGEFTLHDMRKQMQAMDNMGPLDQVMDMIPGMGGGLMDELPDDAMDVTQERMRGFEVIMDSMTEAEMADPRSVGASQIRRIARGSGQPEDRVRELLDQHKMMAQTMQQFQGMGDGDMQRMMSKMQQQGGGGGGGFGGMF</sequence>
<proteinExistence type="inferred from homology"/>
<protein>
    <recommendedName>
        <fullName evidence="1">Signal recognition particle 54 kDa protein</fullName>
        <shortName evidence="1">SRP54</shortName>
        <ecNumber evidence="1">3.6.5.4</ecNumber>
    </recommendedName>
</protein>
<gene>
    <name evidence="1" type="primary">srp54</name>
    <name type="ordered locus">OE_4450R</name>
</gene>
<accession>B0R7X3</accession>
<organism>
    <name type="scientific">Halobacterium salinarum (strain ATCC 29341 / DSM 671 / R1)</name>
    <dbReference type="NCBI Taxonomy" id="478009"/>
    <lineage>
        <taxon>Archaea</taxon>
        <taxon>Methanobacteriati</taxon>
        <taxon>Methanobacteriota</taxon>
        <taxon>Stenosarchaea group</taxon>
        <taxon>Halobacteria</taxon>
        <taxon>Halobacteriales</taxon>
        <taxon>Halobacteriaceae</taxon>
        <taxon>Halobacterium</taxon>
        <taxon>Halobacterium salinarum NRC-34001</taxon>
    </lineage>
</organism>